<name>STPAP_XENTR</name>
<protein>
    <recommendedName>
        <fullName>Speckle targeted PIP5K1A-regulated poly(A) polymerase</fullName>
        <shortName>Star-PAP</shortName>
        <ecNumber evidence="1">2.7.7.19</ecNumber>
    </recommendedName>
    <alternativeName>
        <fullName>RNA-binding motif protein 21</fullName>
        <shortName>RNA-binding protein 21</shortName>
    </alternativeName>
    <alternativeName>
        <fullName>U6 snRNA-specific terminal uridylyltransferase 1</fullName>
        <shortName>U6-TUTase</shortName>
        <ecNumber evidence="1">2.7.7.52</ecNumber>
    </alternativeName>
</protein>
<sequence>MEAEESSSSVVPLPQDVQSVVRGGFRCLLCGVNIPNRPSLTDHLSGRRHVRLHEERDKRNQQQERSVYVSNFPRETSEEQLRDVFQKISPVRNIVMDKDRGLYAIVEFESKDGMCAALEEPQIKLSGKRLRVKPREKKEFQRKKGGSPRTLQPPDPEALSKELLNCADVEQQIKKLVSLCSPSHHESHLRELLLSLLQETFTEFFPGCQLLPFGSSVNGFEISGCDLDLYLDLGDDEAENVEGKAEKEIQNREESSTDMEVSMEDPETERKEEEMEIGNSKNDEDEDVTPGLSLKGLSSEEILEVVGKVLRHCVPGVHGVQSVPTARRPVIHFQHKTSGLRGDVTLNNRLALRNSSFLRLCSDLDARVPQLVYTVRYWARVNQLAGNPFGGGPLLNNYALTLLVFFFLQTRNPPVLPTLVHLREETANEVPQVIDGWDCSFPSDPAQVKESGNQQSLSSLLSEFFSFYASLDLHLLILCPCNGLTIPLPFSSPPPAWSEGFRLGPLNIQDPFELSHNVCGNVSSRAARRFISHCAAAARICRTPNYNLHSTSHPWGITPILLPPPTERECVGRGGTEISIPLGGVSPEKTYAAVSKVFVDVLLCTLEEGREDSCQEGKALELSTKHAKAQCKVEKNEVGGELGEQEVPCKAEQNNTKEASKQKSIFKTEEGMTESARRKREMTEPCMSDMTNGKKRRLEFTRGIWDHHLATSAMEEEMCGEAHKDSKTKIDYSNNGTAQWELLVWHRVWEGRRKERRRKQKGEADGVELEIAVSQALALEKEDKCDGPLMKLILTAQLTVKESLQLYLTPKFDPQGLSSTFFHFLESYLPRMVAQIQGCGDPV</sequence>
<keyword id="KW-0067">ATP-binding</keyword>
<keyword id="KW-0460">Magnesium</keyword>
<keyword id="KW-0464">Manganese</keyword>
<keyword id="KW-0479">Metal-binding</keyword>
<keyword id="KW-0507">mRNA processing</keyword>
<keyword id="KW-0547">Nucleotide-binding</keyword>
<keyword id="KW-0548">Nucleotidyltransferase</keyword>
<keyword id="KW-0539">Nucleus</keyword>
<keyword id="KW-1185">Reference proteome</keyword>
<keyword id="KW-0694">RNA-binding</keyword>
<keyword id="KW-0808">Transferase</keyword>
<keyword id="KW-0862">Zinc</keyword>
<keyword id="KW-0863">Zinc-finger</keyword>
<gene>
    <name type="primary">tut1</name>
    <name type="synonym">rbm21</name>
</gene>
<accession>A9JTS5</accession>
<dbReference type="EC" id="2.7.7.19" evidence="1"/>
<dbReference type="EC" id="2.7.7.52" evidence="1"/>
<dbReference type="EMBL" id="BC155457">
    <property type="protein sequence ID" value="AAI55458.1"/>
    <property type="molecule type" value="mRNA"/>
</dbReference>
<dbReference type="RefSeq" id="XP_002941502.2">
    <property type="nucleotide sequence ID" value="XM_002941456.4"/>
</dbReference>
<dbReference type="SMR" id="A9JTS5"/>
<dbReference type="FunCoup" id="A9JTS5">
    <property type="interactions" value="3454"/>
</dbReference>
<dbReference type="STRING" id="8364.ENSXETP00000027805"/>
<dbReference type="PaxDb" id="8364-ENSXETP00000061858"/>
<dbReference type="GeneID" id="100127188"/>
<dbReference type="KEGG" id="xtr:100127188"/>
<dbReference type="CTD" id="64852"/>
<dbReference type="eggNOG" id="KOG2277">
    <property type="taxonomic scope" value="Eukaryota"/>
</dbReference>
<dbReference type="InParanoid" id="A9JTS5"/>
<dbReference type="OrthoDB" id="2274644at2759"/>
<dbReference type="Proteomes" id="UP000008143">
    <property type="component" value="Chromosome 4"/>
</dbReference>
<dbReference type="GO" id="GO:0005847">
    <property type="term" value="C:mRNA cleavage and polyadenylation specificity factor complex"/>
    <property type="evidence" value="ECO:0000250"/>
    <property type="project" value="UniProtKB"/>
</dbReference>
<dbReference type="GO" id="GO:0016607">
    <property type="term" value="C:nuclear speck"/>
    <property type="evidence" value="ECO:0000250"/>
    <property type="project" value="UniProtKB"/>
</dbReference>
<dbReference type="GO" id="GO:0005730">
    <property type="term" value="C:nucleolus"/>
    <property type="evidence" value="ECO:0000250"/>
    <property type="project" value="UniProtKB"/>
</dbReference>
<dbReference type="GO" id="GO:0005524">
    <property type="term" value="F:ATP binding"/>
    <property type="evidence" value="ECO:0007669"/>
    <property type="project" value="UniProtKB-KW"/>
</dbReference>
<dbReference type="GO" id="GO:0140767">
    <property type="term" value="F:enzyme-substrate adaptor activity"/>
    <property type="evidence" value="ECO:0000250"/>
    <property type="project" value="UniProtKB"/>
</dbReference>
<dbReference type="GO" id="GO:0003730">
    <property type="term" value="F:mRNA 3'-UTR binding"/>
    <property type="evidence" value="ECO:0000250"/>
    <property type="project" value="UniProtKB"/>
</dbReference>
<dbReference type="GO" id="GO:1990817">
    <property type="term" value="F:poly(A) RNA polymerase activity"/>
    <property type="evidence" value="ECO:0000250"/>
    <property type="project" value="UniProtKB"/>
</dbReference>
<dbReference type="GO" id="GO:0003723">
    <property type="term" value="F:RNA binding"/>
    <property type="evidence" value="ECO:0000250"/>
    <property type="project" value="UniProtKB"/>
</dbReference>
<dbReference type="GO" id="GO:0050265">
    <property type="term" value="F:RNA uridylyltransferase activity"/>
    <property type="evidence" value="ECO:0000250"/>
    <property type="project" value="UniProtKB"/>
</dbReference>
<dbReference type="GO" id="GO:0008270">
    <property type="term" value="F:zinc ion binding"/>
    <property type="evidence" value="ECO:0007669"/>
    <property type="project" value="UniProtKB-KW"/>
</dbReference>
<dbReference type="GO" id="GO:0180010">
    <property type="term" value="P:co-transcriptional mRNA 3'-end processing, cleavage and polyadenylation pathway"/>
    <property type="evidence" value="ECO:0000250"/>
    <property type="project" value="UniProtKB"/>
</dbReference>
<dbReference type="GO" id="GO:0016180">
    <property type="term" value="P:snRNA processing"/>
    <property type="evidence" value="ECO:0000250"/>
    <property type="project" value="UniProtKB"/>
</dbReference>
<dbReference type="CDD" id="cd05402">
    <property type="entry name" value="NT_PAP_TUTase"/>
    <property type="match status" value="1"/>
</dbReference>
<dbReference type="CDD" id="cd12279">
    <property type="entry name" value="RRM_TUT1"/>
    <property type="match status" value="1"/>
</dbReference>
<dbReference type="FunFam" id="1.10.1410.10:FF:000008">
    <property type="entry name" value="speckle targeted PIP5K1A-regulated poly(A) polymerase"/>
    <property type="match status" value="1"/>
</dbReference>
<dbReference type="FunFam" id="3.30.70.330:FF:000305">
    <property type="entry name" value="speckle targeted PIP5K1A-regulated poly(A) polymerase"/>
    <property type="match status" value="1"/>
</dbReference>
<dbReference type="Gene3D" id="1.10.1410.10">
    <property type="match status" value="2"/>
</dbReference>
<dbReference type="Gene3D" id="3.30.70.330">
    <property type="match status" value="1"/>
</dbReference>
<dbReference type="Gene3D" id="3.30.460.10">
    <property type="entry name" value="Beta Polymerase, domain 2"/>
    <property type="match status" value="1"/>
</dbReference>
<dbReference type="InterPro" id="IPR054708">
    <property type="entry name" value="MTPAP-like_central"/>
</dbReference>
<dbReference type="InterPro" id="IPR043519">
    <property type="entry name" value="NT_sf"/>
</dbReference>
<dbReference type="InterPro" id="IPR012677">
    <property type="entry name" value="Nucleotide-bd_a/b_plait_sf"/>
</dbReference>
<dbReference type="InterPro" id="IPR002058">
    <property type="entry name" value="PAP_assoc"/>
</dbReference>
<dbReference type="InterPro" id="IPR035979">
    <property type="entry name" value="RBD_domain_sf"/>
</dbReference>
<dbReference type="InterPro" id="IPR000504">
    <property type="entry name" value="RRM_dom"/>
</dbReference>
<dbReference type="InterPro" id="IPR034388">
    <property type="entry name" value="Star-PAP_RRM"/>
</dbReference>
<dbReference type="InterPro" id="IPR013087">
    <property type="entry name" value="Znf_C2H2_type"/>
</dbReference>
<dbReference type="PANTHER" id="PTHR12271">
    <property type="entry name" value="POLY A POLYMERASE CID PAP -RELATED"/>
    <property type="match status" value="1"/>
</dbReference>
<dbReference type="PANTHER" id="PTHR12271:SF127">
    <property type="entry name" value="SPECKLE TARGETED PIP5K1A-REGULATED POLY(A) POLYMERASE"/>
    <property type="match status" value="1"/>
</dbReference>
<dbReference type="Pfam" id="PF22600">
    <property type="entry name" value="MTPAP-like_central"/>
    <property type="match status" value="1"/>
</dbReference>
<dbReference type="Pfam" id="PF03828">
    <property type="entry name" value="PAP_assoc"/>
    <property type="match status" value="1"/>
</dbReference>
<dbReference type="Pfam" id="PF00076">
    <property type="entry name" value="RRM_1"/>
    <property type="match status" value="1"/>
</dbReference>
<dbReference type="SMART" id="SM00360">
    <property type="entry name" value="RRM"/>
    <property type="match status" value="1"/>
</dbReference>
<dbReference type="SUPFAM" id="SSF81301">
    <property type="entry name" value="Nucleotidyltransferase"/>
    <property type="match status" value="1"/>
</dbReference>
<dbReference type="SUPFAM" id="SSF81631">
    <property type="entry name" value="PAP/OAS1 substrate-binding domain"/>
    <property type="match status" value="1"/>
</dbReference>
<dbReference type="SUPFAM" id="SSF54928">
    <property type="entry name" value="RNA-binding domain, RBD"/>
    <property type="match status" value="1"/>
</dbReference>
<dbReference type="PROSITE" id="PS50102">
    <property type="entry name" value="RRM"/>
    <property type="match status" value="1"/>
</dbReference>
<dbReference type="PROSITE" id="PS00028">
    <property type="entry name" value="ZINC_FINGER_C2H2_1"/>
    <property type="match status" value="1"/>
</dbReference>
<feature type="chain" id="PRO_0000404591" description="Speckle targeted PIP5K1A-regulated poly(A) polymerase">
    <location>
        <begin position="1"/>
        <end position="843"/>
    </location>
</feature>
<feature type="domain" description="RRM" evidence="5">
    <location>
        <begin position="54"/>
        <end position="126"/>
    </location>
</feature>
<feature type="domain" description="PAP-associated" evidence="3">
    <location>
        <begin position="456"/>
        <end position="516"/>
    </location>
</feature>
<feature type="zinc finger region" description="Matrin-type" evidence="4">
    <location>
        <begin position="25"/>
        <end position="55"/>
    </location>
</feature>
<feature type="region of interest" description="Disordered" evidence="6">
    <location>
        <begin position="134"/>
        <end position="157"/>
    </location>
</feature>
<feature type="region of interest" description="Disordered" evidence="6">
    <location>
        <begin position="241"/>
        <end position="292"/>
    </location>
</feature>
<feature type="region of interest" description="KA1; binds the bulging loops of U6 snRNA but is dispensable for terminal uridylyltransferase activity" evidence="1">
    <location>
        <begin position="564"/>
        <end position="837"/>
    </location>
</feature>
<feature type="region of interest" description="Disordered" evidence="6">
    <location>
        <begin position="653"/>
        <end position="691"/>
    </location>
</feature>
<feature type="compositionally biased region" description="Basic residues" evidence="6">
    <location>
        <begin position="134"/>
        <end position="146"/>
    </location>
</feature>
<feature type="compositionally biased region" description="Basic and acidic residues" evidence="6">
    <location>
        <begin position="241"/>
        <end position="255"/>
    </location>
</feature>
<feature type="compositionally biased region" description="Basic and acidic residues" evidence="6">
    <location>
        <begin position="658"/>
        <end position="670"/>
    </location>
</feature>
<feature type="binding site" evidence="1">
    <location>
        <position position="215"/>
    </location>
    <ligand>
        <name>ATP</name>
        <dbReference type="ChEBI" id="CHEBI:30616"/>
    </ligand>
</feature>
<feature type="binding site" evidence="1">
    <location>
        <position position="226"/>
    </location>
    <ligand>
        <name>Mg(2+)</name>
        <dbReference type="ChEBI" id="CHEBI:18420"/>
        <note>catalytic</note>
    </ligand>
</feature>
<feature type="binding site" evidence="1">
    <location>
        <position position="226"/>
    </location>
    <ligand>
        <name>UTP</name>
        <dbReference type="ChEBI" id="CHEBI:46398"/>
    </ligand>
</feature>
<feature type="binding site" evidence="1">
    <location>
        <position position="228"/>
    </location>
    <ligand>
        <name>Mg(2+)</name>
        <dbReference type="ChEBI" id="CHEBI:18420"/>
        <note>catalytic</note>
    </ligand>
</feature>
<feature type="binding site" evidence="1">
    <location>
        <position position="228"/>
    </location>
    <ligand>
        <name>UTP</name>
        <dbReference type="ChEBI" id="CHEBI:46398"/>
    </ligand>
</feature>
<feature type="binding site" evidence="1">
    <location>
        <position position="354"/>
    </location>
    <ligand>
        <name>ATP</name>
        <dbReference type="ChEBI" id="CHEBI:30616"/>
    </ligand>
</feature>
<feature type="binding site" evidence="1">
    <location>
        <position position="354"/>
    </location>
    <ligand>
        <name>UTP</name>
        <dbReference type="ChEBI" id="CHEBI:46398"/>
    </ligand>
</feature>
<feature type="binding site" evidence="1">
    <location>
        <position position="376"/>
    </location>
    <ligand>
        <name>UTP</name>
        <dbReference type="ChEBI" id="CHEBI:46398"/>
    </ligand>
</feature>
<feature type="binding site" evidence="1">
    <location>
        <position position="398"/>
    </location>
    <ligand>
        <name>UTP</name>
        <dbReference type="ChEBI" id="CHEBI:46398"/>
    </ligand>
</feature>
<feature type="binding site" evidence="1">
    <location>
        <position position="516"/>
    </location>
    <ligand>
        <name>UTP</name>
        <dbReference type="ChEBI" id="CHEBI:46398"/>
    </ligand>
</feature>
<organism>
    <name type="scientific">Xenopus tropicalis</name>
    <name type="common">Western clawed frog</name>
    <name type="synonym">Silurana tropicalis</name>
    <dbReference type="NCBI Taxonomy" id="8364"/>
    <lineage>
        <taxon>Eukaryota</taxon>
        <taxon>Metazoa</taxon>
        <taxon>Chordata</taxon>
        <taxon>Craniata</taxon>
        <taxon>Vertebrata</taxon>
        <taxon>Euteleostomi</taxon>
        <taxon>Amphibia</taxon>
        <taxon>Batrachia</taxon>
        <taxon>Anura</taxon>
        <taxon>Pipoidea</taxon>
        <taxon>Pipidae</taxon>
        <taxon>Xenopodinae</taxon>
        <taxon>Xenopus</taxon>
        <taxon>Silurana</taxon>
    </lineage>
</organism>
<comment type="function">
    <text evidence="1">Poly(A) polymerase that creates the 3'-poly(A) tail of specific pre-mRNAs. In addition to polyadenylation, it is also required for the 3'-end cleavage of pre-mRNAs: binds to the 3'UTR of targeted pre-mRNAs and promotes the recruitment and assembly of the CPSF complex on the 3'UTR of pre-mRNAs. In addition to adenylyltransferase activity, also has uridylyltransferase activity. However, the ATP ratio is higher than UTP in cells, suggesting that it functions primarily as a poly(A) polymerase.</text>
</comment>
<comment type="catalytic activity">
    <reaction evidence="1">
        <text>RNA(n) + UTP = RNA(n)-3'-uridine ribonucleotide + diphosphate</text>
        <dbReference type="Rhea" id="RHEA:14785"/>
        <dbReference type="Rhea" id="RHEA-COMP:14527"/>
        <dbReference type="Rhea" id="RHEA-COMP:17348"/>
        <dbReference type="ChEBI" id="CHEBI:33019"/>
        <dbReference type="ChEBI" id="CHEBI:46398"/>
        <dbReference type="ChEBI" id="CHEBI:140395"/>
        <dbReference type="ChEBI" id="CHEBI:173116"/>
        <dbReference type="EC" id="2.7.7.52"/>
    </reaction>
</comment>
<comment type="catalytic activity">
    <reaction evidence="1">
        <text>RNA(n) + ATP = RNA(n)-3'-adenine ribonucleotide + diphosphate</text>
        <dbReference type="Rhea" id="RHEA:11332"/>
        <dbReference type="Rhea" id="RHEA-COMP:14527"/>
        <dbReference type="Rhea" id="RHEA-COMP:17347"/>
        <dbReference type="ChEBI" id="CHEBI:30616"/>
        <dbReference type="ChEBI" id="CHEBI:33019"/>
        <dbReference type="ChEBI" id="CHEBI:140395"/>
        <dbReference type="ChEBI" id="CHEBI:173115"/>
        <dbReference type="EC" id="2.7.7.19"/>
    </reaction>
</comment>
<comment type="cofactor">
    <cofactor evidence="1">
        <name>Mg(2+)</name>
        <dbReference type="ChEBI" id="CHEBI:18420"/>
    </cofactor>
    <cofactor evidence="2">
        <name>Mn(2+)</name>
        <dbReference type="ChEBI" id="CHEBI:29035"/>
    </cofactor>
    <text evidence="1">Binds 1 divalent cation per subunit.</text>
</comment>
<comment type="subunit">
    <text evidence="1">Associates with the cleavage and polyadenylation specificity factor (CPSF) complex.</text>
</comment>
<comment type="subcellular location">
    <subcellularLocation>
        <location evidence="1">Nucleus</location>
        <location evidence="1">Nucleolus</location>
    </subcellularLocation>
    <subcellularLocation>
        <location evidence="1">Nucleus speckle</location>
    </subcellularLocation>
</comment>
<comment type="domain">
    <text evidence="1">The zinc-finger domain is required for terminal uridylyltransferase activity. Together with the RRM domain, binds the 5'-area of U6 snRNA.</text>
</comment>
<comment type="domain">
    <text evidence="1">The RRM domain is required for terminal uridylyltransferase activity. Together with the zinc-finger domain, binds the 5'-area of U6 snRNA.</text>
</comment>
<comment type="similarity">
    <text evidence="7">Belongs to the DNA polymerase type-B-like family.</text>
</comment>
<proteinExistence type="evidence at transcript level"/>
<evidence type="ECO:0000250" key="1">
    <source>
        <dbReference type="UniProtKB" id="Q9H6E5"/>
    </source>
</evidence>
<evidence type="ECO:0000250" key="2">
    <source>
        <dbReference type="UniProtKB" id="Q9NVV4"/>
    </source>
</evidence>
<evidence type="ECO:0000255" key="3"/>
<evidence type="ECO:0000255" key="4">
    <source>
        <dbReference type="PROSITE-ProRule" id="PRU00130"/>
    </source>
</evidence>
<evidence type="ECO:0000255" key="5">
    <source>
        <dbReference type="PROSITE-ProRule" id="PRU00176"/>
    </source>
</evidence>
<evidence type="ECO:0000256" key="6">
    <source>
        <dbReference type="SAM" id="MobiDB-lite"/>
    </source>
</evidence>
<evidence type="ECO:0000305" key="7"/>
<reference key="1">
    <citation type="submission" date="2007-11" db="EMBL/GenBank/DDBJ databases">
        <authorList>
            <consortium name="NIH - Xenopus Gene Collection (XGC) project"/>
        </authorList>
    </citation>
    <scope>NUCLEOTIDE SEQUENCE [LARGE SCALE MRNA]</scope>
    <source>
        <strain>TGA IC</strain>
        <tissue>Testis</tissue>
    </source>
</reference>